<keyword id="KW-0997">Cell inner membrane</keyword>
<keyword id="KW-1003">Cell membrane</keyword>
<keyword id="KW-0472">Membrane</keyword>
<keyword id="KW-0812">Transmembrane</keyword>
<keyword id="KW-1133">Transmembrane helix</keyword>
<organism>
    <name type="scientific">Aliivibrio salmonicida (strain LFI1238)</name>
    <name type="common">Vibrio salmonicida (strain LFI1238)</name>
    <dbReference type="NCBI Taxonomy" id="316275"/>
    <lineage>
        <taxon>Bacteria</taxon>
        <taxon>Pseudomonadati</taxon>
        <taxon>Pseudomonadota</taxon>
        <taxon>Gammaproteobacteria</taxon>
        <taxon>Vibrionales</taxon>
        <taxon>Vibrionaceae</taxon>
        <taxon>Aliivibrio</taxon>
    </lineage>
</organism>
<feature type="chain" id="PRO_1000132368" description="Fumarate reductase subunit C">
    <location>
        <begin position="1"/>
        <end position="127"/>
    </location>
</feature>
<feature type="transmembrane region" description="Helical" evidence="1">
    <location>
        <begin position="30"/>
        <end position="50"/>
    </location>
</feature>
<feature type="transmembrane region" description="Helical" evidence="1">
    <location>
        <begin position="67"/>
        <end position="87"/>
    </location>
</feature>
<feature type="transmembrane region" description="Helical" evidence="1">
    <location>
        <begin position="107"/>
        <end position="127"/>
    </location>
</feature>
<proteinExistence type="inferred from homology"/>
<comment type="function">
    <text evidence="1">Anchors the catalytic components of the fumarate reductase complex to the cell membrane, binds quinones.</text>
</comment>
<comment type="subunit">
    <text evidence="1">Part of an enzyme complex containing four subunits: a flavoprotein (FrdA), an iron-sulfur protein (FrdB), and two hydrophobic anchor proteins (FrdC and FrdD).</text>
</comment>
<comment type="subcellular location">
    <subcellularLocation>
        <location evidence="1">Cell inner membrane</location>
        <topology evidence="1">Multi-pass membrane protein</topology>
    </subcellularLocation>
</comment>
<comment type="similarity">
    <text evidence="1">Belongs to the FrdC family.</text>
</comment>
<protein>
    <recommendedName>
        <fullName evidence="1">Fumarate reductase subunit C</fullName>
    </recommendedName>
    <alternativeName>
        <fullName evidence="1">Quinol-fumarate reductase subunit C</fullName>
        <shortName evidence="1">QFR subunit C</shortName>
    </alternativeName>
</protein>
<sequence length="127" mass="14353">MSNRKPYVREMTRTWWKDHPFYRFYMVREATILPLIFFTICLLVGLGSLVKGPLAWASWLDFMANPIVVALNIVALAGSLFHAQTFFSMMPQVMPIRLGGKTLDKKVVVLAQWAAVAAITLLVLVIV</sequence>
<name>FRDC_ALISL</name>
<dbReference type="EMBL" id="FM178379">
    <property type="protein sequence ID" value="CAQ80474.1"/>
    <property type="molecule type" value="Genomic_DNA"/>
</dbReference>
<dbReference type="RefSeq" id="WP_012551226.1">
    <property type="nucleotide sequence ID" value="NC_011312.1"/>
</dbReference>
<dbReference type="SMR" id="B6EMS0"/>
<dbReference type="GeneID" id="56276469"/>
<dbReference type="KEGG" id="vsa:VSAL_I2790"/>
<dbReference type="eggNOG" id="COG3029">
    <property type="taxonomic scope" value="Bacteria"/>
</dbReference>
<dbReference type="HOGENOM" id="CLU_156492_0_0_6"/>
<dbReference type="Proteomes" id="UP000001730">
    <property type="component" value="Chromosome 1"/>
</dbReference>
<dbReference type="GO" id="GO:0045283">
    <property type="term" value="C:fumarate reductase complex"/>
    <property type="evidence" value="ECO:0007669"/>
    <property type="project" value="UniProtKB-UniRule"/>
</dbReference>
<dbReference type="GO" id="GO:0005886">
    <property type="term" value="C:plasma membrane"/>
    <property type="evidence" value="ECO:0007669"/>
    <property type="project" value="UniProtKB-SubCell"/>
</dbReference>
<dbReference type="GO" id="GO:0000104">
    <property type="term" value="F:succinate dehydrogenase activity"/>
    <property type="evidence" value="ECO:0007669"/>
    <property type="project" value="UniProtKB-UniRule"/>
</dbReference>
<dbReference type="CDD" id="cd00546">
    <property type="entry name" value="QFR_TypeD_subunitC"/>
    <property type="match status" value="1"/>
</dbReference>
<dbReference type="Gene3D" id="1.20.1300.10">
    <property type="entry name" value="Fumarate reductase/succinate dehydrogenase, transmembrane subunit"/>
    <property type="match status" value="1"/>
</dbReference>
<dbReference type="HAMAP" id="MF_00708">
    <property type="entry name" value="Fumarate_red_C"/>
    <property type="match status" value="1"/>
</dbReference>
<dbReference type="InterPro" id="IPR003510">
    <property type="entry name" value="Fumarate_red_C"/>
</dbReference>
<dbReference type="InterPro" id="IPR034804">
    <property type="entry name" value="SQR/QFR_C/D"/>
</dbReference>
<dbReference type="NCBIfam" id="NF003445">
    <property type="entry name" value="PRK04987.1"/>
    <property type="match status" value="1"/>
</dbReference>
<dbReference type="Pfam" id="PF02300">
    <property type="entry name" value="Fumarate_red_C"/>
    <property type="match status" value="1"/>
</dbReference>
<dbReference type="PIRSF" id="PIRSF000180">
    <property type="entry name" value="FrdC"/>
    <property type="match status" value="1"/>
</dbReference>
<dbReference type="SUPFAM" id="SSF81343">
    <property type="entry name" value="Fumarate reductase respiratory complex transmembrane subunits"/>
    <property type="match status" value="1"/>
</dbReference>
<accession>B6EMS0</accession>
<evidence type="ECO:0000255" key="1">
    <source>
        <dbReference type="HAMAP-Rule" id="MF_00708"/>
    </source>
</evidence>
<reference key="1">
    <citation type="journal article" date="2008" name="BMC Genomics">
        <title>The genome sequence of the fish pathogen Aliivibrio salmonicida strain LFI1238 shows extensive evidence of gene decay.</title>
        <authorList>
            <person name="Hjerde E."/>
            <person name="Lorentzen M.S."/>
            <person name="Holden M.T."/>
            <person name="Seeger K."/>
            <person name="Paulsen S."/>
            <person name="Bason N."/>
            <person name="Churcher C."/>
            <person name="Harris D."/>
            <person name="Norbertczak H."/>
            <person name="Quail M.A."/>
            <person name="Sanders S."/>
            <person name="Thurston S."/>
            <person name="Parkhill J."/>
            <person name="Willassen N.P."/>
            <person name="Thomson N.R."/>
        </authorList>
    </citation>
    <scope>NUCLEOTIDE SEQUENCE [LARGE SCALE GENOMIC DNA]</scope>
    <source>
        <strain>LFI1238</strain>
    </source>
</reference>
<gene>
    <name evidence="1" type="primary">frdC</name>
    <name type="ordered locus">VSAL_I2790</name>
</gene>